<accession>Q5UNY8</accession>
<reference key="1">
    <citation type="journal article" date="2004" name="Science">
        <title>The 1.2-megabase genome sequence of Mimivirus.</title>
        <authorList>
            <person name="Raoult D."/>
            <person name="Audic S."/>
            <person name="Robert C."/>
            <person name="Abergel C."/>
            <person name="Renesto P."/>
            <person name="Ogata H."/>
            <person name="La Scola B."/>
            <person name="Susan M."/>
            <person name="Claverie J.-M."/>
        </authorList>
    </citation>
    <scope>NUCLEOTIDE SEQUENCE [LARGE SCALE GENOMIC DNA]</scope>
    <source>
        <strain>Rowbotham-Bradford</strain>
    </source>
</reference>
<proteinExistence type="predicted"/>
<name>YR736_MIMIV</name>
<dbReference type="EMBL" id="AY653733">
    <property type="protein sequence ID" value="AAV50996.1"/>
    <property type="molecule type" value="Genomic_DNA"/>
</dbReference>
<dbReference type="KEGG" id="vg:9925392"/>
<dbReference type="OrthoDB" id="36116at10239"/>
<dbReference type="Proteomes" id="UP000001134">
    <property type="component" value="Genome"/>
</dbReference>
<sequence length="283" mass="33406">MSNNRDYMICEIDEYNNIRAINNSGIYHNINEAICCMLDIVLVYKCPKEYEPLNEPVKSNKQDIGIFEVEVNPDNTFIVLSKIVINKRDLSMASLTLGEEITRKYFNLSKSRYNTISDISLELFGNNPTIQEIDNVCQEFIELSVRHFKNMIQTNQNIDNFEPDMKELARLFEPKKMHRLYYERLIQEKIIDDLTAQIRNLGYYCKISIQEFKSINPFVEPRVYLSYIAPVKIIDSYLHIVEMNSMNLEEDESKLYVLKKFCKNNDIKEYSSIYKCLLSKIQF</sequence>
<feature type="chain" id="PRO_0000071339" description="Uncharacterized protein R736">
    <location>
        <begin position="1"/>
        <end position="283"/>
    </location>
</feature>
<organism>
    <name type="scientific">Acanthamoeba polyphaga mimivirus</name>
    <name type="common">APMV</name>
    <dbReference type="NCBI Taxonomy" id="212035"/>
    <lineage>
        <taxon>Viruses</taxon>
        <taxon>Varidnaviria</taxon>
        <taxon>Bamfordvirae</taxon>
        <taxon>Nucleocytoviricota</taxon>
        <taxon>Megaviricetes</taxon>
        <taxon>Imitervirales</taxon>
        <taxon>Mimiviridae</taxon>
        <taxon>Megamimivirinae</taxon>
        <taxon>Mimivirus</taxon>
        <taxon>Mimivirus bradfordmassiliense</taxon>
    </lineage>
</organism>
<organismHost>
    <name type="scientific">Acanthamoeba polyphaga</name>
    <name type="common">Amoeba</name>
    <dbReference type="NCBI Taxonomy" id="5757"/>
</organismHost>
<protein>
    <recommendedName>
        <fullName>Uncharacterized protein R736</fullName>
    </recommendedName>
</protein>
<gene>
    <name type="ordered locus">MIMI_R736</name>
</gene>
<keyword id="KW-1185">Reference proteome</keyword>